<dbReference type="EMBL" id="CU928161">
    <property type="protein sequence ID" value="CAR02575.1"/>
    <property type="molecule type" value="Genomic_DNA"/>
</dbReference>
<dbReference type="RefSeq" id="WP_000406401.1">
    <property type="nucleotide sequence ID" value="NC_011742.1"/>
</dbReference>
<dbReference type="SMR" id="B7MK83"/>
<dbReference type="KEGG" id="ecz:ECS88_1249"/>
<dbReference type="HOGENOM" id="CLU_041110_0_0_6"/>
<dbReference type="Proteomes" id="UP000000747">
    <property type="component" value="Chromosome"/>
</dbReference>
<dbReference type="GO" id="GO:0005886">
    <property type="term" value="C:plasma membrane"/>
    <property type="evidence" value="ECO:0007669"/>
    <property type="project" value="UniProtKB-SubCell"/>
</dbReference>
<dbReference type="GO" id="GO:0015385">
    <property type="term" value="F:sodium:proton antiporter activity"/>
    <property type="evidence" value="ECO:0007669"/>
    <property type="project" value="InterPro"/>
</dbReference>
<dbReference type="HAMAP" id="MF_01599">
    <property type="entry name" value="NhaB"/>
    <property type="match status" value="1"/>
</dbReference>
<dbReference type="InterPro" id="IPR004671">
    <property type="entry name" value="Na+/H+_antiporter_NhaB"/>
</dbReference>
<dbReference type="NCBIfam" id="TIGR00774">
    <property type="entry name" value="NhaB"/>
    <property type="match status" value="1"/>
</dbReference>
<dbReference type="NCBIfam" id="NF007093">
    <property type="entry name" value="PRK09547.1"/>
    <property type="match status" value="1"/>
</dbReference>
<dbReference type="PANTHER" id="PTHR43302:SF1">
    <property type="entry name" value="NA(+)_H(+) ANTIPORTER NHAB"/>
    <property type="match status" value="1"/>
</dbReference>
<dbReference type="PANTHER" id="PTHR43302">
    <property type="entry name" value="TRANSPORTER ARSB-RELATED"/>
    <property type="match status" value="1"/>
</dbReference>
<dbReference type="Pfam" id="PF06450">
    <property type="entry name" value="NhaB"/>
    <property type="match status" value="1"/>
</dbReference>
<feature type="chain" id="PRO_1000191536" description="Na(+)/H(+) antiporter NhaB">
    <location>
        <begin position="1"/>
        <end position="513"/>
    </location>
</feature>
<feature type="transmembrane region" description="Helical" evidence="1">
    <location>
        <begin position="23"/>
        <end position="43"/>
    </location>
</feature>
<feature type="transmembrane region" description="Helical" evidence="1">
    <location>
        <begin position="52"/>
        <end position="72"/>
    </location>
</feature>
<feature type="transmembrane region" description="Helical" evidence="1">
    <location>
        <begin position="97"/>
        <end position="117"/>
    </location>
</feature>
<feature type="transmembrane region" description="Helical" evidence="1">
    <location>
        <begin position="120"/>
        <end position="140"/>
    </location>
</feature>
<feature type="transmembrane region" description="Helical" evidence="1">
    <location>
        <begin position="144"/>
        <end position="164"/>
    </location>
</feature>
<feature type="transmembrane region" description="Helical" evidence="1">
    <location>
        <begin position="202"/>
        <end position="222"/>
    </location>
</feature>
<feature type="transmembrane region" description="Helical" evidence="1">
    <location>
        <begin position="238"/>
        <end position="258"/>
    </location>
</feature>
<feature type="transmembrane region" description="Helical" evidence="1">
    <location>
        <begin position="303"/>
        <end position="323"/>
    </location>
</feature>
<feature type="transmembrane region" description="Helical" evidence="1">
    <location>
        <begin position="348"/>
        <end position="368"/>
    </location>
</feature>
<feature type="transmembrane region" description="Helical" evidence="1">
    <location>
        <begin position="391"/>
        <end position="411"/>
    </location>
</feature>
<feature type="transmembrane region" description="Helical" evidence="1">
    <location>
        <begin position="447"/>
        <end position="467"/>
    </location>
</feature>
<feature type="transmembrane region" description="Helical" evidence="1">
    <location>
        <begin position="475"/>
        <end position="495"/>
    </location>
</feature>
<proteinExistence type="inferred from homology"/>
<reference key="1">
    <citation type="journal article" date="2009" name="PLoS Genet.">
        <title>Organised genome dynamics in the Escherichia coli species results in highly diverse adaptive paths.</title>
        <authorList>
            <person name="Touchon M."/>
            <person name="Hoede C."/>
            <person name="Tenaillon O."/>
            <person name="Barbe V."/>
            <person name="Baeriswyl S."/>
            <person name="Bidet P."/>
            <person name="Bingen E."/>
            <person name="Bonacorsi S."/>
            <person name="Bouchier C."/>
            <person name="Bouvet O."/>
            <person name="Calteau A."/>
            <person name="Chiapello H."/>
            <person name="Clermont O."/>
            <person name="Cruveiller S."/>
            <person name="Danchin A."/>
            <person name="Diard M."/>
            <person name="Dossat C."/>
            <person name="Karoui M.E."/>
            <person name="Frapy E."/>
            <person name="Garry L."/>
            <person name="Ghigo J.M."/>
            <person name="Gilles A.M."/>
            <person name="Johnson J."/>
            <person name="Le Bouguenec C."/>
            <person name="Lescat M."/>
            <person name="Mangenot S."/>
            <person name="Martinez-Jehanne V."/>
            <person name="Matic I."/>
            <person name="Nassif X."/>
            <person name="Oztas S."/>
            <person name="Petit M.A."/>
            <person name="Pichon C."/>
            <person name="Rouy Z."/>
            <person name="Ruf C.S."/>
            <person name="Schneider D."/>
            <person name="Tourret J."/>
            <person name="Vacherie B."/>
            <person name="Vallenet D."/>
            <person name="Medigue C."/>
            <person name="Rocha E.P.C."/>
            <person name="Denamur E."/>
        </authorList>
    </citation>
    <scope>NUCLEOTIDE SEQUENCE [LARGE SCALE GENOMIC DNA]</scope>
    <source>
        <strain>S88 / ExPEC</strain>
    </source>
</reference>
<protein>
    <recommendedName>
        <fullName evidence="1">Na(+)/H(+) antiporter NhaB</fullName>
    </recommendedName>
    <alternativeName>
        <fullName evidence="1">Sodium/proton antiporter NhaB</fullName>
    </alternativeName>
</protein>
<comment type="function">
    <text evidence="1">Na(+)/H(+) antiporter that extrudes sodium in exchange for external protons.</text>
</comment>
<comment type="catalytic activity">
    <reaction evidence="1">
        <text>2 Na(+)(in) + 3 H(+)(out) = 2 Na(+)(out) + 3 H(+)(in)</text>
        <dbReference type="Rhea" id="RHEA:29247"/>
        <dbReference type="ChEBI" id="CHEBI:15378"/>
        <dbReference type="ChEBI" id="CHEBI:29101"/>
    </reaction>
    <physiologicalReaction direction="left-to-right" evidence="1">
        <dbReference type="Rhea" id="RHEA:29248"/>
    </physiologicalReaction>
</comment>
<comment type="subcellular location">
    <subcellularLocation>
        <location evidence="1">Cell inner membrane</location>
        <topology evidence="1">Multi-pass membrane protein</topology>
    </subcellularLocation>
</comment>
<comment type="similarity">
    <text evidence="1">Belongs to the NhaB Na(+)/H(+) (TC 2.A.34) antiporter family.</text>
</comment>
<evidence type="ECO:0000255" key="1">
    <source>
        <dbReference type="HAMAP-Rule" id="MF_01599"/>
    </source>
</evidence>
<gene>
    <name evidence="1" type="primary">nhaB</name>
    <name type="ordered locus">ECS88_1249</name>
</gene>
<organism>
    <name type="scientific">Escherichia coli O45:K1 (strain S88 / ExPEC)</name>
    <dbReference type="NCBI Taxonomy" id="585035"/>
    <lineage>
        <taxon>Bacteria</taxon>
        <taxon>Pseudomonadati</taxon>
        <taxon>Pseudomonadota</taxon>
        <taxon>Gammaproteobacteria</taxon>
        <taxon>Enterobacterales</taxon>
        <taxon>Enterobacteriaceae</taxon>
        <taxon>Escherichia</taxon>
    </lineage>
</organism>
<sequence>MEISWGRALWRNFLGQSPDWYKLALIIFLIVNPLIFLISPFVAGWLLVAEFIFTLAMALKCYPLLPGGLLAIEAVFIGMTSAEHVREEVAANLEVLLLLMFMVAGIYFMKQLLLFIFTRLLLSIRSKMLLSLSFCVAAAFLSAFLDALTVVAVVISVAVGFYGIYHRVASSRTEDTDLQDDSHIDKHYKVVLEQFRGFLRSLMMHAGVGTALGGVMTMVGEPQNLIIAKAAGWHFGDFFLRMSPVTVPVLICGLLTCLLVEKLRWFGYGETLPEKVREVLQQFDDQSRLQRTRQDKIRLIVQAIIGVWLVTALALHLAEVGLIGLSVIILATSLTGVTDEHAIGKAFTESLPFTALLTVFFSVVAVIIDQQLFSPIIQFVLQASEHAQLSLFYIFNGLLSSISDNVFVGTIYINEAKAAMKSGAITLKQYELLAVAINTGTNLPSVATPNGQAAFLFLLTSALAPLIRLSYGRMVWMALPYTLVLTLVGLLCVEFTLAPVTEWFMQMGWIATL</sequence>
<accession>B7MK83</accession>
<keyword id="KW-0050">Antiport</keyword>
<keyword id="KW-0997">Cell inner membrane</keyword>
<keyword id="KW-1003">Cell membrane</keyword>
<keyword id="KW-0406">Ion transport</keyword>
<keyword id="KW-0472">Membrane</keyword>
<keyword id="KW-1185">Reference proteome</keyword>
<keyword id="KW-0915">Sodium</keyword>
<keyword id="KW-0739">Sodium transport</keyword>
<keyword id="KW-0812">Transmembrane</keyword>
<keyword id="KW-1133">Transmembrane helix</keyword>
<keyword id="KW-0813">Transport</keyword>
<name>NHAB_ECO45</name>